<sequence length="203" mass="23569">MPRYLGPRFKKIRRLGALPGLTNKSPKAGSDLRKQPRSRKKSQYRIRLEEKQKLCFHYGLREYQLLNYVRIAAKAKGPTGQVLLQLLEMRLDNILFRLGMASTIPAARQLVNHRHILVNGRIVDRPSYRCKPRDIIMTKDNQKSRTLIQNSLGSSPQKELPNHLTLHPFQYKGLVNQIIDSKWVGLKINELLVVEYYSRQTKA</sequence>
<geneLocation type="chloroplast"/>
<proteinExistence type="inferred from homology"/>
<comment type="function">
    <text evidence="1">One of the primary rRNA binding proteins, it binds directly to 16S rRNA where it nucleates assembly of the body of the 30S subunit.</text>
</comment>
<comment type="function">
    <text evidence="1">With S5 and S12 plays an important role in translational accuracy.</text>
</comment>
<comment type="subunit">
    <text evidence="1">Part of the 30S ribosomal subunit. Contacts protein S5. The interaction surface between S4 and S5 is involved in control of translational fidelity (By similarity).</text>
</comment>
<comment type="subcellular location">
    <subcellularLocation>
        <location>Plastid</location>
        <location>Chloroplast</location>
    </subcellularLocation>
</comment>
<comment type="similarity">
    <text evidence="3">Belongs to the universal ribosomal protein uS4 family.</text>
</comment>
<keyword id="KW-0150">Chloroplast</keyword>
<keyword id="KW-0934">Plastid</keyword>
<keyword id="KW-0687">Ribonucleoprotein</keyword>
<keyword id="KW-0689">Ribosomal protein</keyword>
<keyword id="KW-0694">RNA-binding</keyword>
<keyword id="KW-0699">rRNA-binding</keyword>
<gene>
    <name type="primary">rps4</name>
    <name type="ORF">JNC0512</name>
</gene>
<accession>Q06RC7</accession>
<organism>
    <name type="scientific">Jasminum nudiflorum</name>
    <name type="common">Winter jasmine</name>
    <dbReference type="NCBI Taxonomy" id="126431"/>
    <lineage>
        <taxon>Eukaryota</taxon>
        <taxon>Viridiplantae</taxon>
        <taxon>Streptophyta</taxon>
        <taxon>Embryophyta</taxon>
        <taxon>Tracheophyta</taxon>
        <taxon>Spermatophyta</taxon>
        <taxon>Magnoliopsida</taxon>
        <taxon>eudicotyledons</taxon>
        <taxon>Gunneridae</taxon>
        <taxon>Pentapetalae</taxon>
        <taxon>asterids</taxon>
        <taxon>lamiids</taxon>
        <taxon>Lamiales</taxon>
        <taxon>Oleaceae</taxon>
        <taxon>Jasmineae</taxon>
        <taxon>Jasminum</taxon>
    </lineage>
</organism>
<reference key="1">
    <citation type="journal article" date="2007" name="Mol. Biol. Evol.">
        <title>Gene relocations within chloroplast genomes of Jasminum and Menodora (Oleaceae) are due to multiple, overlapping inversions.</title>
        <authorList>
            <person name="Lee H.-L."/>
            <person name="Jansen R.K."/>
            <person name="Chumley T.W."/>
            <person name="Kim K.-J."/>
        </authorList>
    </citation>
    <scope>NUCLEOTIDE SEQUENCE [LARGE SCALE GENOMIC DNA]</scope>
</reference>
<evidence type="ECO:0000250" key="1"/>
<evidence type="ECO:0000256" key="2">
    <source>
        <dbReference type="SAM" id="MobiDB-lite"/>
    </source>
</evidence>
<evidence type="ECO:0000305" key="3"/>
<protein>
    <recommendedName>
        <fullName evidence="3">Small ribosomal subunit protein uS4c</fullName>
    </recommendedName>
    <alternativeName>
        <fullName>30S ribosomal protein S4, chloroplastic</fullName>
    </alternativeName>
</protein>
<feature type="chain" id="PRO_0000277012" description="Small ribosomal subunit protein uS4c">
    <location>
        <begin position="1"/>
        <end position="203"/>
    </location>
</feature>
<feature type="domain" description="S4 RNA-binding">
    <location>
        <begin position="89"/>
        <end position="152"/>
    </location>
</feature>
<feature type="region of interest" description="Disordered" evidence="2">
    <location>
        <begin position="19"/>
        <end position="43"/>
    </location>
</feature>
<name>RR4_JASNU</name>
<dbReference type="EMBL" id="DQ673255">
    <property type="protein sequence ID" value="ABG74632.1"/>
    <property type="molecule type" value="Genomic_DNA"/>
</dbReference>
<dbReference type="RefSeq" id="YP_778494.1">
    <property type="nucleotide sequence ID" value="NC_008407.1"/>
</dbReference>
<dbReference type="SMR" id="Q06RC7"/>
<dbReference type="GeneID" id="4319843"/>
<dbReference type="GO" id="GO:0009507">
    <property type="term" value="C:chloroplast"/>
    <property type="evidence" value="ECO:0007669"/>
    <property type="project" value="UniProtKB-SubCell"/>
</dbReference>
<dbReference type="GO" id="GO:0015935">
    <property type="term" value="C:small ribosomal subunit"/>
    <property type="evidence" value="ECO:0007669"/>
    <property type="project" value="InterPro"/>
</dbReference>
<dbReference type="GO" id="GO:0019843">
    <property type="term" value="F:rRNA binding"/>
    <property type="evidence" value="ECO:0007669"/>
    <property type="project" value="UniProtKB-UniRule"/>
</dbReference>
<dbReference type="GO" id="GO:0003735">
    <property type="term" value="F:structural constituent of ribosome"/>
    <property type="evidence" value="ECO:0007669"/>
    <property type="project" value="InterPro"/>
</dbReference>
<dbReference type="GO" id="GO:0042274">
    <property type="term" value="P:ribosomal small subunit biogenesis"/>
    <property type="evidence" value="ECO:0007669"/>
    <property type="project" value="TreeGrafter"/>
</dbReference>
<dbReference type="GO" id="GO:0006412">
    <property type="term" value="P:translation"/>
    <property type="evidence" value="ECO:0007669"/>
    <property type="project" value="UniProtKB-UniRule"/>
</dbReference>
<dbReference type="CDD" id="cd00165">
    <property type="entry name" value="S4"/>
    <property type="match status" value="1"/>
</dbReference>
<dbReference type="FunFam" id="1.10.1050.10:FF:000002">
    <property type="entry name" value="30S ribosomal protein S4, chloroplastic"/>
    <property type="match status" value="1"/>
</dbReference>
<dbReference type="FunFam" id="3.10.290.10:FF:000081">
    <property type="entry name" value="30S ribosomal protein S4, chloroplastic"/>
    <property type="match status" value="1"/>
</dbReference>
<dbReference type="Gene3D" id="1.10.1050.10">
    <property type="entry name" value="Ribosomal Protein S4 Delta 41, Chain A, domain 1"/>
    <property type="match status" value="1"/>
</dbReference>
<dbReference type="Gene3D" id="3.10.290.10">
    <property type="entry name" value="RNA-binding S4 domain"/>
    <property type="match status" value="1"/>
</dbReference>
<dbReference type="HAMAP" id="MF_01306_B">
    <property type="entry name" value="Ribosomal_uS4_B"/>
    <property type="match status" value="1"/>
</dbReference>
<dbReference type="InterPro" id="IPR022801">
    <property type="entry name" value="Ribosomal_uS4"/>
</dbReference>
<dbReference type="InterPro" id="IPR005709">
    <property type="entry name" value="Ribosomal_uS4_bac-type"/>
</dbReference>
<dbReference type="InterPro" id="IPR018079">
    <property type="entry name" value="Ribosomal_uS4_CS"/>
</dbReference>
<dbReference type="InterPro" id="IPR001912">
    <property type="entry name" value="Ribosomal_uS4_N"/>
</dbReference>
<dbReference type="InterPro" id="IPR002942">
    <property type="entry name" value="S4_RNA-bd"/>
</dbReference>
<dbReference type="InterPro" id="IPR036986">
    <property type="entry name" value="S4_RNA-bd_sf"/>
</dbReference>
<dbReference type="NCBIfam" id="NF003717">
    <property type="entry name" value="PRK05327.1"/>
    <property type="match status" value="1"/>
</dbReference>
<dbReference type="NCBIfam" id="TIGR01017">
    <property type="entry name" value="rpsD_bact"/>
    <property type="match status" value="1"/>
</dbReference>
<dbReference type="PANTHER" id="PTHR11831">
    <property type="entry name" value="30S 40S RIBOSOMAL PROTEIN"/>
    <property type="match status" value="1"/>
</dbReference>
<dbReference type="PANTHER" id="PTHR11831:SF4">
    <property type="entry name" value="SMALL RIBOSOMAL SUBUNIT PROTEIN US4M"/>
    <property type="match status" value="1"/>
</dbReference>
<dbReference type="Pfam" id="PF00163">
    <property type="entry name" value="Ribosomal_S4"/>
    <property type="match status" value="1"/>
</dbReference>
<dbReference type="Pfam" id="PF01479">
    <property type="entry name" value="S4"/>
    <property type="match status" value="1"/>
</dbReference>
<dbReference type="SMART" id="SM01390">
    <property type="entry name" value="Ribosomal_S4"/>
    <property type="match status" value="1"/>
</dbReference>
<dbReference type="SMART" id="SM00363">
    <property type="entry name" value="S4"/>
    <property type="match status" value="1"/>
</dbReference>
<dbReference type="SUPFAM" id="SSF55174">
    <property type="entry name" value="Alpha-L RNA-binding motif"/>
    <property type="match status" value="1"/>
</dbReference>
<dbReference type="PROSITE" id="PS00632">
    <property type="entry name" value="RIBOSOMAL_S4"/>
    <property type="match status" value="1"/>
</dbReference>
<dbReference type="PROSITE" id="PS50889">
    <property type="entry name" value="S4"/>
    <property type="match status" value="1"/>
</dbReference>